<sequence>MLFYSFVWSVLAASVALAKTHKLNYTASWVTANPDGLHEKRMIGFNGEWPLPDIHVEKGDRVELYLTNGFQDNTATSLHFHGLFQNTSLGNQLQMDGPSMVTQCPIVPGQTYLYNFTVPEQVGTFWYHAHMGAQYGDGMRGAFIIHDPEEPFEYDHERVITLSDHYHENYKTVTKEFLSRYNPTGAEPIPQNILFNNTMNVTLDFTPGETYLFRFLNVGLFVSQYIILEDHEMSIVEVDGVYVKPNFTDSIYLSAGQRMSVLIKAKDKMPTRNYAMMQIMDETMLDVVPPELQLNQTIQMRYGHSLPEARALNIEDCDLDRATNDFYLEPLIERDLLAHYDHQIVMDVRMVNLGDGVKYAFFNNITYVTPKVPTLTTLLTSGKLASDPRIYGDNINAQLLKHNDIIEVVLNNYDSGRHPFHLHGHNFQIVQKSPGFHVDEAYDESEQDEMTVPYNESAPLQPFPERPMVRDTVVLEPSGHVVLRFRADNPGVWYFHCHVDWHLQQGLASVFIEAPVLLQEREKLNENYLDICKAADIPVVGNAAGHSNDWFDLKGLPRQPEPLPKGFTTEGYLALIISTIIGVWGLYSIAQYGIGEVIPNDEKVYHTLREILAENEIEVSRG</sequence>
<evidence type="ECO:0000250" key="1"/>
<evidence type="ECO:0000255" key="2"/>
<evidence type="ECO:0000269" key="3">
    <source>
    </source>
</evidence>
<evidence type="ECO:0000269" key="4">
    <source>
    </source>
</evidence>
<evidence type="ECO:0000305" key="5"/>
<feature type="signal peptide" evidence="2">
    <location>
        <begin position="1"/>
        <end position="18"/>
    </location>
</feature>
<feature type="chain" id="PRO_0000002960" description="Iron transport multicopper oxidase FET5">
    <location>
        <begin position="19"/>
        <end position="622"/>
    </location>
</feature>
<feature type="topological domain" description="Extracellular" evidence="2">
    <location>
        <begin position="19"/>
        <end position="573"/>
    </location>
</feature>
<feature type="transmembrane region" description="Helical" evidence="2">
    <location>
        <begin position="574"/>
        <end position="594"/>
    </location>
</feature>
<feature type="topological domain" description="Cytoplasmic" evidence="2">
    <location>
        <begin position="595"/>
        <end position="622"/>
    </location>
</feature>
<feature type="domain" description="Plastocyanin-like 1">
    <location>
        <begin position="43"/>
        <end position="146"/>
    </location>
</feature>
<feature type="domain" description="Plastocyanin-like 2">
    <location>
        <begin position="192"/>
        <end position="301"/>
    </location>
</feature>
<feature type="domain" description="Plastocyanin-like 3">
    <location>
        <begin position="392"/>
        <end position="514"/>
    </location>
</feature>
<feature type="binding site" description="type 2 copper site" evidence="1">
    <location>
        <position position="79"/>
    </location>
    <ligand>
        <name>Cu cation</name>
        <dbReference type="ChEBI" id="CHEBI:23378"/>
        <label>1</label>
    </ligand>
</feature>
<feature type="binding site" description="type 3 copper site" evidence="1">
    <location>
        <position position="81"/>
    </location>
    <ligand>
        <name>Cu cation</name>
        <dbReference type="ChEBI" id="CHEBI:23378"/>
        <label>2</label>
    </ligand>
</feature>
<feature type="binding site" description="type 3 copper site" evidence="1">
    <location>
        <position position="128"/>
    </location>
    <ligand>
        <name>Cu cation</name>
        <dbReference type="ChEBI" id="CHEBI:23378"/>
        <label>2</label>
    </ligand>
</feature>
<feature type="binding site" description="type 3 copper site" evidence="1">
    <location>
        <position position="130"/>
    </location>
    <ligand>
        <name>Cu cation</name>
        <dbReference type="ChEBI" id="CHEBI:23378"/>
        <label>3</label>
    </ligand>
</feature>
<feature type="binding site" description="type 1 copper site" evidence="1">
    <location>
        <position position="418"/>
    </location>
    <ligand>
        <name>Cu cation</name>
        <dbReference type="ChEBI" id="CHEBI:23378"/>
        <label>4</label>
    </ligand>
</feature>
<feature type="binding site" description="type 2 copper site" evidence="1">
    <location>
        <position position="421"/>
    </location>
    <ligand>
        <name>Cu cation</name>
        <dbReference type="ChEBI" id="CHEBI:23378"/>
        <label>1</label>
    </ligand>
</feature>
<feature type="binding site" description="type 3 copper site" evidence="1">
    <location>
        <position position="423"/>
    </location>
    <ligand>
        <name>Cu cation</name>
        <dbReference type="ChEBI" id="CHEBI:23378"/>
        <label>3</label>
    </ligand>
</feature>
<feature type="binding site" description="type 3 copper site" evidence="1">
    <location>
        <position position="496"/>
    </location>
    <ligand>
        <name>Cu cation</name>
        <dbReference type="ChEBI" id="CHEBI:23378"/>
        <label>3</label>
    </ligand>
</feature>
<feature type="binding site" description="type 1 copper site" evidence="1">
    <location>
        <position position="497"/>
    </location>
    <ligand>
        <name>Cu cation</name>
        <dbReference type="ChEBI" id="CHEBI:23378"/>
        <label>4</label>
    </ligand>
</feature>
<feature type="binding site" description="type 3 copper site" evidence="1">
    <location>
        <position position="498"/>
    </location>
    <ligand>
        <name>Cu cation</name>
        <dbReference type="ChEBI" id="CHEBI:23378"/>
        <label>2</label>
    </ligand>
</feature>
<feature type="binding site" description="type 1 copper site" evidence="1">
    <location>
        <position position="502"/>
    </location>
    <ligand>
        <name>Cu cation</name>
        <dbReference type="ChEBI" id="CHEBI:23378"/>
        <label>4</label>
    </ligand>
</feature>
<feature type="glycosylation site" description="N-linked (GlcNAc...) asparagine" evidence="2">
    <location>
        <position position="24"/>
    </location>
</feature>
<feature type="glycosylation site" description="N-linked (GlcNAc...) asparagine" evidence="2">
    <location>
        <position position="86"/>
    </location>
</feature>
<feature type="glycosylation site" description="N-linked (GlcNAc...) asparagine" evidence="2">
    <location>
        <position position="115"/>
    </location>
</feature>
<feature type="glycosylation site" description="N-linked (GlcNAc...) asparagine" evidence="2">
    <location>
        <position position="196"/>
    </location>
</feature>
<feature type="glycosylation site" description="N-linked (GlcNAc...) asparagine" evidence="2">
    <location>
        <position position="200"/>
    </location>
</feature>
<feature type="glycosylation site" description="N-linked (GlcNAc...) asparagine" evidence="2">
    <location>
        <position position="246"/>
    </location>
</feature>
<feature type="glycosylation site" description="N-linked (GlcNAc...) asparagine" evidence="2">
    <location>
        <position position="295"/>
    </location>
</feature>
<feature type="glycosylation site" description="N-linked (GlcNAc...) asparagine" evidence="2">
    <location>
        <position position="364"/>
    </location>
</feature>
<feature type="glycosylation site" description="N-linked (GlcNAc...) asparagine" evidence="2">
    <location>
        <position position="455"/>
    </location>
</feature>
<name>FET5_YEAST</name>
<keyword id="KW-1003">Cell membrane</keyword>
<keyword id="KW-0186">Copper</keyword>
<keyword id="KW-0325">Glycoprotein</keyword>
<keyword id="KW-0406">Ion transport</keyword>
<keyword id="KW-0408">Iron</keyword>
<keyword id="KW-0410">Iron transport</keyword>
<keyword id="KW-0472">Membrane</keyword>
<keyword id="KW-0479">Metal-binding</keyword>
<keyword id="KW-0560">Oxidoreductase</keyword>
<keyword id="KW-1185">Reference proteome</keyword>
<keyword id="KW-0677">Repeat</keyword>
<keyword id="KW-0732">Signal</keyword>
<keyword id="KW-0812">Transmembrane</keyword>
<keyword id="KW-1133">Transmembrane helix</keyword>
<keyword id="KW-0813">Transport</keyword>
<reference key="1">
    <citation type="journal article" date="1995" name="Nat. Genet.">
        <title>Analysis of the nucleotide sequence of chromosome VI from Saccharomyces cerevisiae.</title>
        <authorList>
            <person name="Murakami Y."/>
            <person name="Naitou M."/>
            <person name="Hagiwara H."/>
            <person name="Shibata T."/>
            <person name="Ozawa M."/>
            <person name="Sasanuma S."/>
            <person name="Sasanuma M."/>
            <person name="Tsuchiya Y."/>
            <person name="Soeda E."/>
            <person name="Yokoyama K."/>
            <person name="Yamazaki M."/>
            <person name="Tashiro H."/>
            <person name="Eki T."/>
        </authorList>
    </citation>
    <scope>NUCLEOTIDE SEQUENCE [LARGE SCALE GENOMIC DNA]</scope>
    <source>
        <strain>ATCC 204508 / S288c</strain>
    </source>
</reference>
<reference key="2">
    <citation type="journal article" date="2014" name="G3 (Bethesda)">
        <title>The reference genome sequence of Saccharomyces cerevisiae: Then and now.</title>
        <authorList>
            <person name="Engel S.R."/>
            <person name="Dietrich F.S."/>
            <person name="Fisk D.G."/>
            <person name="Binkley G."/>
            <person name="Balakrishnan R."/>
            <person name="Costanzo M.C."/>
            <person name="Dwight S.S."/>
            <person name="Hitz B.C."/>
            <person name="Karra K."/>
            <person name="Nash R.S."/>
            <person name="Weng S."/>
            <person name="Wong E.D."/>
            <person name="Lloyd P."/>
            <person name="Skrzypek M.S."/>
            <person name="Miyasato S.R."/>
            <person name="Simison M."/>
            <person name="Cherry J.M."/>
        </authorList>
    </citation>
    <scope>GENOME REANNOTATION</scope>
    <source>
        <strain>ATCC 204508 / S288c</strain>
    </source>
</reference>
<reference key="3">
    <citation type="journal article" date="1997" name="Mol. Gen. Genet.">
        <title>The yeast FET5 gene encodes a FET3-related multicopper oxidase implicated in iron transport.</title>
        <authorList>
            <person name="Spizzo T."/>
            <person name="Byersdorfer C."/>
            <person name="Duesterhoeft S."/>
            <person name="Eide D."/>
        </authorList>
    </citation>
    <scope>CHARACTERIZATION</scope>
</reference>
<reference key="4">
    <citation type="journal article" date="1999" name="J. Biol. Chem.">
        <title>The iron transporter Fth1p forms a complex with the Fet5 iron oxidase and resides on the vacuolar membrane.</title>
        <authorList>
            <person name="Urbanowski J.L."/>
            <person name="Piper R.C."/>
        </authorList>
    </citation>
    <scope>INTERACTION WITH FTH1</scope>
</reference>
<reference key="5">
    <citation type="journal article" date="2003" name="Nature">
        <title>Global analysis of protein expression in yeast.</title>
        <authorList>
            <person name="Ghaemmaghami S."/>
            <person name="Huh W.-K."/>
            <person name="Bower K."/>
            <person name="Howson R.W."/>
            <person name="Belle A."/>
            <person name="Dephoure N."/>
            <person name="O'Shea E.K."/>
            <person name="Weissman J.S."/>
        </authorList>
    </citation>
    <scope>LEVEL OF PROTEIN EXPRESSION [LARGE SCALE ANALYSIS]</scope>
</reference>
<dbReference type="EC" id="1.-.-.-"/>
<dbReference type="EMBL" id="D50617">
    <property type="protein sequence ID" value="BAA09199.1"/>
    <property type="molecule type" value="Genomic_DNA"/>
</dbReference>
<dbReference type="EMBL" id="BK006940">
    <property type="protein sequence ID" value="DAA12399.1"/>
    <property type="molecule type" value="Genomic_DNA"/>
</dbReference>
<dbReference type="PIR" id="S56214">
    <property type="entry name" value="S56214"/>
</dbReference>
<dbReference type="RefSeq" id="NP_116612.1">
    <property type="nucleotide sequence ID" value="NM_001179925.1"/>
</dbReference>
<dbReference type="SMR" id="P43561"/>
<dbReference type="BioGRID" id="31105">
    <property type="interactions" value="83"/>
</dbReference>
<dbReference type="ComplexPortal" id="CPX-869">
    <property type="entry name" value="FET5-FTH1 high affinity iron exporter complex"/>
</dbReference>
<dbReference type="DIP" id="DIP-6774N"/>
<dbReference type="FunCoup" id="P43561">
    <property type="interactions" value="784"/>
</dbReference>
<dbReference type="IntAct" id="P43561">
    <property type="interactions" value="8"/>
</dbReference>
<dbReference type="MINT" id="P43561"/>
<dbReference type="STRING" id="4932.YFL041W"/>
<dbReference type="CAZy" id="AA1">
    <property type="family name" value="Auxiliary Activities 1"/>
</dbReference>
<dbReference type="TCDB" id="2.A.108.1.4">
    <property type="family name" value="the iron/lead transporter (ilt) family"/>
</dbReference>
<dbReference type="GlyCosmos" id="P43561">
    <property type="glycosylation" value="9 sites, No reported glycans"/>
</dbReference>
<dbReference type="GlyGen" id="P43561">
    <property type="glycosylation" value="9 sites"/>
</dbReference>
<dbReference type="iPTMnet" id="P43561"/>
<dbReference type="PaxDb" id="4932-YFL041W"/>
<dbReference type="PeptideAtlas" id="P43561"/>
<dbReference type="TopDownProteomics" id="P43561"/>
<dbReference type="EnsemblFungi" id="YFL041W_mRNA">
    <property type="protein sequence ID" value="YFL041W"/>
    <property type="gene ID" value="YFL041W"/>
</dbReference>
<dbReference type="GeneID" id="850502"/>
<dbReference type="KEGG" id="sce:YFL041W"/>
<dbReference type="AGR" id="SGD:S000001853"/>
<dbReference type="SGD" id="S000001853">
    <property type="gene designation" value="FET5"/>
</dbReference>
<dbReference type="VEuPathDB" id="FungiDB:YFL041W"/>
<dbReference type="eggNOG" id="KOG1263">
    <property type="taxonomic scope" value="Eukaryota"/>
</dbReference>
<dbReference type="HOGENOM" id="CLU_006504_7_3_1"/>
<dbReference type="InParanoid" id="P43561"/>
<dbReference type="OMA" id="GHNFQIV"/>
<dbReference type="OrthoDB" id="2121828at2759"/>
<dbReference type="BioCyc" id="YEAST:YFL041W-MONOMER"/>
<dbReference type="BioGRID-ORCS" id="850502">
    <property type="hits" value="0 hits in 10 CRISPR screens"/>
</dbReference>
<dbReference type="PRO" id="PR:P43561"/>
<dbReference type="Proteomes" id="UP000002311">
    <property type="component" value="Chromosome VI"/>
</dbReference>
<dbReference type="RNAct" id="P43561">
    <property type="molecule type" value="protein"/>
</dbReference>
<dbReference type="GO" id="GO:0005783">
    <property type="term" value="C:endoplasmic reticulum"/>
    <property type="evidence" value="ECO:0007005"/>
    <property type="project" value="SGD"/>
</dbReference>
<dbReference type="GO" id="GO:0000329">
    <property type="term" value="C:fungal-type vacuole membrane"/>
    <property type="evidence" value="ECO:0000314"/>
    <property type="project" value="SGD"/>
</dbReference>
<dbReference type="GO" id="GO:0061841">
    <property type="term" value="C:high-affinity iron exporter complex"/>
    <property type="evidence" value="ECO:0000353"/>
    <property type="project" value="ComplexPortal"/>
</dbReference>
<dbReference type="GO" id="GO:0045121">
    <property type="term" value="C:membrane raft"/>
    <property type="evidence" value="ECO:0000314"/>
    <property type="project" value="SGD"/>
</dbReference>
<dbReference type="GO" id="GO:0005886">
    <property type="term" value="C:plasma membrane"/>
    <property type="evidence" value="ECO:0007669"/>
    <property type="project" value="UniProtKB-SubCell"/>
</dbReference>
<dbReference type="GO" id="GO:0005507">
    <property type="term" value="F:copper ion binding"/>
    <property type="evidence" value="ECO:0007669"/>
    <property type="project" value="InterPro"/>
</dbReference>
<dbReference type="GO" id="GO:0004322">
    <property type="term" value="F:ferroxidase activity"/>
    <property type="evidence" value="ECO:0000316"/>
    <property type="project" value="SGD"/>
</dbReference>
<dbReference type="GO" id="GO:0010106">
    <property type="term" value="P:cellular response to iron ion starvation"/>
    <property type="evidence" value="ECO:0000318"/>
    <property type="project" value="GO_Central"/>
</dbReference>
<dbReference type="GO" id="GO:0006879">
    <property type="term" value="P:intracellular iron ion homeostasis"/>
    <property type="evidence" value="ECO:0000314"/>
    <property type="project" value="ComplexPortal"/>
</dbReference>
<dbReference type="GO" id="GO:0034755">
    <property type="term" value="P:iron ion transmembrane transport"/>
    <property type="evidence" value="ECO:0000314"/>
    <property type="project" value="ComplexPortal"/>
</dbReference>
<dbReference type="GO" id="GO:0006826">
    <property type="term" value="P:iron ion transport"/>
    <property type="evidence" value="ECO:0000315"/>
    <property type="project" value="SGD"/>
</dbReference>
<dbReference type="GO" id="GO:0033215">
    <property type="term" value="P:reductive iron assimilation"/>
    <property type="evidence" value="ECO:0000318"/>
    <property type="project" value="GO_Central"/>
</dbReference>
<dbReference type="CDD" id="cd13851">
    <property type="entry name" value="CuRO_1_Fet3p"/>
    <property type="match status" value="1"/>
</dbReference>
<dbReference type="CDD" id="cd13877">
    <property type="entry name" value="CuRO_2_Fet3p_like"/>
    <property type="match status" value="1"/>
</dbReference>
<dbReference type="CDD" id="cd13899">
    <property type="entry name" value="CuRO_3_Fet3p"/>
    <property type="match status" value="1"/>
</dbReference>
<dbReference type="FunFam" id="2.60.40.420:FF:000022">
    <property type="entry name" value="FET5p Multicopper oxidase"/>
    <property type="match status" value="1"/>
</dbReference>
<dbReference type="FunFam" id="2.60.40.420:FF:000024">
    <property type="entry name" value="FET5p Multicopper oxidase"/>
    <property type="match status" value="1"/>
</dbReference>
<dbReference type="FunFam" id="2.60.40.420:FF:000025">
    <property type="entry name" value="FET5p Multicopper oxidase"/>
    <property type="match status" value="1"/>
</dbReference>
<dbReference type="Gene3D" id="2.60.40.420">
    <property type="entry name" value="Cupredoxins - blue copper proteins"/>
    <property type="match status" value="3"/>
</dbReference>
<dbReference type="InterPro" id="IPR011707">
    <property type="entry name" value="Cu-oxidase-like_N"/>
</dbReference>
<dbReference type="InterPro" id="IPR001117">
    <property type="entry name" value="Cu-oxidase_2nd"/>
</dbReference>
<dbReference type="InterPro" id="IPR011706">
    <property type="entry name" value="Cu-oxidase_C"/>
</dbReference>
<dbReference type="InterPro" id="IPR045087">
    <property type="entry name" value="Cu-oxidase_fam"/>
</dbReference>
<dbReference type="InterPro" id="IPR033138">
    <property type="entry name" value="Cu_oxidase_CS"/>
</dbReference>
<dbReference type="InterPro" id="IPR002355">
    <property type="entry name" value="Cu_oxidase_Cu_BS"/>
</dbReference>
<dbReference type="InterPro" id="IPR008972">
    <property type="entry name" value="Cupredoxin"/>
</dbReference>
<dbReference type="InterPro" id="IPR044130">
    <property type="entry name" value="CuRO_2_Fet3-like"/>
</dbReference>
<dbReference type="PANTHER" id="PTHR11709:SF434">
    <property type="entry name" value="IRON TRANSPORT MULTICOPPER OXIDASE FET5-RELATED"/>
    <property type="match status" value="1"/>
</dbReference>
<dbReference type="PANTHER" id="PTHR11709">
    <property type="entry name" value="MULTI-COPPER OXIDASE"/>
    <property type="match status" value="1"/>
</dbReference>
<dbReference type="Pfam" id="PF00394">
    <property type="entry name" value="Cu-oxidase"/>
    <property type="match status" value="1"/>
</dbReference>
<dbReference type="Pfam" id="PF07731">
    <property type="entry name" value="Cu-oxidase_2"/>
    <property type="match status" value="1"/>
</dbReference>
<dbReference type="Pfam" id="PF07732">
    <property type="entry name" value="Cu-oxidase_3"/>
    <property type="match status" value="1"/>
</dbReference>
<dbReference type="SUPFAM" id="SSF49503">
    <property type="entry name" value="Cupredoxins"/>
    <property type="match status" value="3"/>
</dbReference>
<dbReference type="PROSITE" id="PS00079">
    <property type="entry name" value="MULTICOPPER_OXIDASE1"/>
    <property type="match status" value="1"/>
</dbReference>
<dbReference type="PROSITE" id="PS00080">
    <property type="entry name" value="MULTICOPPER_OXIDASE2"/>
    <property type="match status" value="1"/>
</dbReference>
<accession>P43561</accession>
<accession>D6VTI9</accession>
<gene>
    <name type="primary">FET5</name>
    <name type="ordered locus">YFL041W</name>
</gene>
<proteinExistence type="evidence at protein level"/>
<organism>
    <name type="scientific">Saccharomyces cerevisiae (strain ATCC 204508 / S288c)</name>
    <name type="common">Baker's yeast</name>
    <dbReference type="NCBI Taxonomy" id="559292"/>
    <lineage>
        <taxon>Eukaryota</taxon>
        <taxon>Fungi</taxon>
        <taxon>Dikarya</taxon>
        <taxon>Ascomycota</taxon>
        <taxon>Saccharomycotina</taxon>
        <taxon>Saccharomycetes</taxon>
        <taxon>Saccharomycetales</taxon>
        <taxon>Saccharomycetaceae</taxon>
        <taxon>Saccharomyces</taxon>
    </lineage>
</organism>
<protein>
    <recommendedName>
        <fullName>Iron transport multicopper oxidase FET5</fullName>
        <ecNumber>1.-.-.-</ecNumber>
    </recommendedName>
</protein>
<comment type="function">
    <text>Iron transport multicopper oxidase, which is required for Fe(2+) high affinity uptake. May be required to oxidize Fe(2+) and release it from the transporter. Essential component of copper-dependent iron transport.</text>
</comment>
<comment type="cofactor">
    <cofactor evidence="1">
        <name>Cu cation</name>
        <dbReference type="ChEBI" id="CHEBI:23378"/>
    </cofactor>
    <text evidence="1">Binds 4 Cu cations per monomer.</text>
</comment>
<comment type="subunit">
    <text evidence="3">Interacts with FTH1.</text>
</comment>
<comment type="interaction">
    <interactant intactId="EBI-6891">
        <id>P43561</id>
    </interactant>
    <interactant intactId="EBI-20959">
        <id>P38310</id>
        <label>FTH1</label>
    </interactant>
    <organismsDiffer>false</organismsDiffer>
    <experiments>8</experiments>
</comment>
<comment type="subcellular location">
    <subcellularLocation>
        <location evidence="5">Cell membrane</location>
        <topology evidence="5">Single-pass membrane protein</topology>
    </subcellularLocation>
</comment>
<comment type="miscellaneous">
    <text evidence="4">Present with 2840 molecules/cell in log phase SD medium.</text>
</comment>
<comment type="similarity">
    <text evidence="5">Belongs to the multicopper oxidase family.</text>
</comment>